<sequence length="300" mass="33097">MNHDYGRLVSRAALAATLVATLLLIIKIFAWWYTGSVSILAALVDSLVDIAASLTNLLVVRYSLQPADEEHTFGHGKAESLAALAQSMFISGSALFLFLTGIQHLITPEPMRAPLVGIVVTVAALVTTLMLVTFQRWVVRKTRSQAVRADMLHYQSDVMMNGAILVALALSWYGLHRADALFALGIGVWILYSALRMGYEAIQSLLDRALPDDERQAIVDIVAAWPGVRGAHDLRTRQSGPTRFIQLHLEMEDNLPLVQAHLIAEQVEQAILSRFPGSDVIIHQDPCSVVPRFQQGQFEH</sequence>
<name>FIEF_CROS8</name>
<keyword id="KW-0997">Cell inner membrane</keyword>
<keyword id="KW-1003">Cell membrane</keyword>
<keyword id="KW-0406">Ion transport</keyword>
<keyword id="KW-0408">Iron</keyword>
<keyword id="KW-0410">Iron transport</keyword>
<keyword id="KW-0472">Membrane</keyword>
<keyword id="KW-0479">Metal-binding</keyword>
<keyword id="KW-1185">Reference proteome</keyword>
<keyword id="KW-0812">Transmembrane</keyword>
<keyword id="KW-1133">Transmembrane helix</keyword>
<keyword id="KW-0813">Transport</keyword>
<keyword id="KW-0862">Zinc</keyword>
<keyword id="KW-0864">Zinc transport</keyword>
<comment type="function">
    <text evidence="1">Divalent metal cation transporter which exports Zn(2+), Cd(2+) and possibly Fe(2+). May be involved in zinc and iron detoxification by efflux.</text>
</comment>
<comment type="catalytic activity">
    <reaction evidence="1">
        <text>Zn(2+)(in) + H(+)(out) = Zn(2+)(out) + H(+)(in)</text>
        <dbReference type="Rhea" id="RHEA:28839"/>
        <dbReference type="ChEBI" id="CHEBI:15378"/>
        <dbReference type="ChEBI" id="CHEBI:29105"/>
    </reaction>
</comment>
<comment type="catalytic activity">
    <reaction evidence="1">
        <text>Cd(2+)(in) + H(+)(out) = Cd(2+)(out) + H(+)(in)</text>
        <dbReference type="Rhea" id="RHEA:28739"/>
        <dbReference type="ChEBI" id="CHEBI:15378"/>
        <dbReference type="ChEBI" id="CHEBI:48775"/>
    </reaction>
</comment>
<comment type="catalytic activity">
    <reaction evidence="1">
        <text>Fe(2+)(in) + H(+)(out) = Fe(2+)(out) + H(+)(in)</text>
        <dbReference type="Rhea" id="RHEA:29439"/>
        <dbReference type="ChEBI" id="CHEBI:15378"/>
        <dbReference type="ChEBI" id="CHEBI:29033"/>
    </reaction>
</comment>
<comment type="subunit">
    <text evidence="1">Homodimer.</text>
</comment>
<comment type="subcellular location">
    <subcellularLocation>
        <location evidence="1">Cell inner membrane</location>
        <topology evidence="1">Multi-pass membrane protein</topology>
    </subcellularLocation>
</comment>
<comment type="similarity">
    <text evidence="1">Belongs to the cation diffusion facilitator (CDF) transporter (TC 2.A.4) family. FieF subfamily.</text>
</comment>
<gene>
    <name evidence="1" type="primary">fieF</name>
    <name type="ordered locus">ESA_04126</name>
</gene>
<feature type="chain" id="PRO_1000024325" description="Cation-efflux pump FieF">
    <location>
        <begin position="1"/>
        <end position="300"/>
    </location>
</feature>
<feature type="transmembrane region" description="Helical" evidence="1">
    <location>
        <begin position="12"/>
        <end position="32"/>
    </location>
</feature>
<feature type="transmembrane region" description="Helical" evidence="1">
    <location>
        <begin position="39"/>
        <end position="59"/>
    </location>
</feature>
<feature type="transmembrane region" description="Helical" evidence="1">
    <location>
        <begin position="82"/>
        <end position="102"/>
    </location>
</feature>
<feature type="transmembrane region" description="Helical" evidence="1">
    <location>
        <begin position="114"/>
        <end position="134"/>
    </location>
</feature>
<feature type="transmembrane region" description="Helical" evidence="1">
    <location>
        <begin position="156"/>
        <end position="176"/>
    </location>
</feature>
<feature type="transmembrane region" description="Helical" evidence="1">
    <location>
        <begin position="182"/>
        <end position="202"/>
    </location>
</feature>
<feature type="binding site" evidence="1">
    <location>
        <position position="45"/>
    </location>
    <ligand>
        <name>Zn(2+)</name>
        <dbReference type="ChEBI" id="CHEBI:29105"/>
    </ligand>
</feature>
<feature type="binding site" evidence="1">
    <location>
        <position position="49"/>
    </location>
    <ligand>
        <name>Zn(2+)</name>
        <dbReference type="ChEBI" id="CHEBI:29105"/>
    </ligand>
</feature>
<feature type="binding site" evidence="1">
    <location>
        <position position="153"/>
    </location>
    <ligand>
        <name>Zn(2+)</name>
        <dbReference type="ChEBI" id="CHEBI:29105"/>
    </ligand>
</feature>
<feature type="binding site" evidence="1">
    <location>
        <position position="157"/>
    </location>
    <ligand>
        <name>Zn(2+)</name>
        <dbReference type="ChEBI" id="CHEBI:29105"/>
    </ligand>
</feature>
<proteinExistence type="inferred from homology"/>
<organism>
    <name type="scientific">Cronobacter sakazakii (strain ATCC BAA-894)</name>
    <name type="common">Enterobacter sakazakii</name>
    <dbReference type="NCBI Taxonomy" id="290339"/>
    <lineage>
        <taxon>Bacteria</taxon>
        <taxon>Pseudomonadati</taxon>
        <taxon>Pseudomonadota</taxon>
        <taxon>Gammaproteobacteria</taxon>
        <taxon>Enterobacterales</taxon>
        <taxon>Enterobacteriaceae</taxon>
        <taxon>Cronobacter</taxon>
    </lineage>
</organism>
<evidence type="ECO:0000255" key="1">
    <source>
        <dbReference type="HAMAP-Rule" id="MF_01425"/>
    </source>
</evidence>
<protein>
    <recommendedName>
        <fullName evidence="1">Cation-efflux pump FieF</fullName>
    </recommendedName>
</protein>
<reference key="1">
    <citation type="journal article" date="2010" name="PLoS ONE">
        <title>Genome sequence of Cronobacter sakazakii BAA-894 and comparative genomic hybridization analysis with other Cronobacter species.</title>
        <authorList>
            <person name="Kucerova E."/>
            <person name="Clifton S.W."/>
            <person name="Xia X.Q."/>
            <person name="Long F."/>
            <person name="Porwollik S."/>
            <person name="Fulton L."/>
            <person name="Fronick C."/>
            <person name="Minx P."/>
            <person name="Kyung K."/>
            <person name="Warren W."/>
            <person name="Fulton R."/>
            <person name="Feng D."/>
            <person name="Wollam A."/>
            <person name="Shah N."/>
            <person name="Bhonagiri V."/>
            <person name="Nash W.E."/>
            <person name="Hallsworth-Pepin K."/>
            <person name="Wilson R.K."/>
            <person name="McClelland M."/>
            <person name="Forsythe S.J."/>
        </authorList>
    </citation>
    <scope>NUCLEOTIDE SEQUENCE [LARGE SCALE GENOMIC DNA]</scope>
    <source>
        <strain>ATCC BAA-894</strain>
    </source>
</reference>
<accession>A7MQ82</accession>
<dbReference type="EMBL" id="CP000783">
    <property type="protein sequence ID" value="ABU79307.1"/>
    <property type="molecule type" value="Genomic_DNA"/>
</dbReference>
<dbReference type="RefSeq" id="WP_012126260.1">
    <property type="nucleotide sequence ID" value="NC_009778.1"/>
</dbReference>
<dbReference type="SMR" id="A7MQ82"/>
<dbReference type="KEGG" id="esa:ESA_04126"/>
<dbReference type="PATRIC" id="fig|290339.8.peg.3667"/>
<dbReference type="HOGENOM" id="CLU_013430_3_0_6"/>
<dbReference type="Proteomes" id="UP000000260">
    <property type="component" value="Chromosome"/>
</dbReference>
<dbReference type="GO" id="GO:0005886">
    <property type="term" value="C:plasma membrane"/>
    <property type="evidence" value="ECO:0007669"/>
    <property type="project" value="UniProtKB-SubCell"/>
</dbReference>
<dbReference type="GO" id="GO:0015086">
    <property type="term" value="F:cadmium ion transmembrane transporter activity"/>
    <property type="evidence" value="ECO:0007669"/>
    <property type="project" value="UniProtKB-UniRule"/>
</dbReference>
<dbReference type="GO" id="GO:0015093">
    <property type="term" value="F:ferrous iron transmembrane transporter activity"/>
    <property type="evidence" value="ECO:0007669"/>
    <property type="project" value="TreeGrafter"/>
</dbReference>
<dbReference type="GO" id="GO:0046872">
    <property type="term" value="F:metal ion binding"/>
    <property type="evidence" value="ECO:0007669"/>
    <property type="project" value="UniProtKB-KW"/>
</dbReference>
<dbReference type="GO" id="GO:0015341">
    <property type="term" value="F:zinc efflux antiporter activity"/>
    <property type="evidence" value="ECO:0007669"/>
    <property type="project" value="TreeGrafter"/>
</dbReference>
<dbReference type="GO" id="GO:0006882">
    <property type="term" value="P:intracellular zinc ion homeostasis"/>
    <property type="evidence" value="ECO:0007669"/>
    <property type="project" value="TreeGrafter"/>
</dbReference>
<dbReference type="FunFam" id="1.20.1510.10:FF:000001">
    <property type="entry name" value="Ferrous-iron efflux pump FieF"/>
    <property type="match status" value="1"/>
</dbReference>
<dbReference type="FunFam" id="3.30.70.1350:FF:000002">
    <property type="entry name" value="Ferrous-iron efflux pump FieF"/>
    <property type="match status" value="1"/>
</dbReference>
<dbReference type="Gene3D" id="1.20.1510.10">
    <property type="entry name" value="Cation efflux protein transmembrane domain"/>
    <property type="match status" value="1"/>
</dbReference>
<dbReference type="Gene3D" id="3.30.70.1350">
    <property type="entry name" value="Cation efflux protein, cytoplasmic domain"/>
    <property type="match status" value="1"/>
</dbReference>
<dbReference type="HAMAP" id="MF_01425">
    <property type="entry name" value="Cation_efflux_FieF"/>
    <property type="match status" value="1"/>
</dbReference>
<dbReference type="InterPro" id="IPR002524">
    <property type="entry name" value="Cation_efflux"/>
</dbReference>
<dbReference type="InterPro" id="IPR027470">
    <property type="entry name" value="Cation_efflux_CTD"/>
</dbReference>
<dbReference type="InterPro" id="IPR036837">
    <property type="entry name" value="Cation_efflux_CTD_sf"/>
</dbReference>
<dbReference type="InterPro" id="IPR023783">
    <property type="entry name" value="Cation_efflux_FieF"/>
</dbReference>
<dbReference type="InterPro" id="IPR027469">
    <property type="entry name" value="Cation_efflux_TMD_sf"/>
</dbReference>
<dbReference type="InterPro" id="IPR050291">
    <property type="entry name" value="CDF_Transporter"/>
</dbReference>
<dbReference type="NCBIfam" id="TIGR01297">
    <property type="entry name" value="CDF"/>
    <property type="match status" value="1"/>
</dbReference>
<dbReference type="NCBIfam" id="NF007064">
    <property type="entry name" value="PRK09509.1"/>
    <property type="match status" value="1"/>
</dbReference>
<dbReference type="PANTHER" id="PTHR43840:SF41">
    <property type="entry name" value="CATION-EFFLUX PUMP FIEF"/>
    <property type="match status" value="1"/>
</dbReference>
<dbReference type="PANTHER" id="PTHR43840">
    <property type="entry name" value="MITOCHONDRIAL METAL TRANSPORTER 1-RELATED"/>
    <property type="match status" value="1"/>
</dbReference>
<dbReference type="Pfam" id="PF01545">
    <property type="entry name" value="Cation_efflux"/>
    <property type="match status" value="1"/>
</dbReference>
<dbReference type="Pfam" id="PF16916">
    <property type="entry name" value="ZT_dimer"/>
    <property type="match status" value="1"/>
</dbReference>
<dbReference type="SUPFAM" id="SSF160240">
    <property type="entry name" value="Cation efflux protein cytoplasmic domain-like"/>
    <property type="match status" value="1"/>
</dbReference>
<dbReference type="SUPFAM" id="SSF161111">
    <property type="entry name" value="Cation efflux protein transmembrane domain-like"/>
    <property type="match status" value="1"/>
</dbReference>